<feature type="chain" id="PRO_0000403603" description="Flap endonuclease 1">
    <location>
        <begin position="1"/>
        <end position="395"/>
    </location>
</feature>
<feature type="region of interest" description="N-domain">
    <location>
        <begin position="1"/>
        <end position="104"/>
    </location>
</feature>
<feature type="region of interest" description="Disordered" evidence="2">
    <location>
        <begin position="103"/>
        <end position="123"/>
    </location>
</feature>
<feature type="region of interest" description="I-domain">
    <location>
        <begin position="122"/>
        <end position="253"/>
    </location>
</feature>
<feature type="region of interest" description="Interaction with PCNA" evidence="1">
    <location>
        <begin position="341"/>
        <end position="349"/>
    </location>
</feature>
<feature type="region of interest" description="Disordered" evidence="2">
    <location>
        <begin position="356"/>
        <end position="395"/>
    </location>
</feature>
<feature type="compositionally biased region" description="Basic and acidic residues" evidence="2">
    <location>
        <begin position="356"/>
        <end position="389"/>
    </location>
</feature>
<feature type="binding site" evidence="1">
    <location>
        <position position="34"/>
    </location>
    <ligand>
        <name>Mg(2+)</name>
        <dbReference type="ChEBI" id="CHEBI:18420"/>
        <label>1</label>
    </ligand>
</feature>
<feature type="binding site" evidence="1">
    <location>
        <position position="47"/>
    </location>
    <ligand>
        <name>DNA</name>
        <dbReference type="ChEBI" id="CHEBI:16991"/>
    </ligand>
</feature>
<feature type="binding site" evidence="1">
    <location>
        <position position="70"/>
    </location>
    <ligand>
        <name>DNA</name>
        <dbReference type="ChEBI" id="CHEBI:16991"/>
    </ligand>
</feature>
<feature type="binding site" evidence="1">
    <location>
        <position position="86"/>
    </location>
    <ligand>
        <name>Mg(2+)</name>
        <dbReference type="ChEBI" id="CHEBI:18420"/>
        <label>1</label>
    </ligand>
</feature>
<feature type="binding site" evidence="1">
    <location>
        <position position="158"/>
    </location>
    <ligand>
        <name>DNA</name>
        <dbReference type="ChEBI" id="CHEBI:16991"/>
    </ligand>
</feature>
<feature type="binding site" evidence="1">
    <location>
        <position position="158"/>
    </location>
    <ligand>
        <name>Mg(2+)</name>
        <dbReference type="ChEBI" id="CHEBI:18420"/>
        <label>1</label>
    </ligand>
</feature>
<feature type="binding site" evidence="1">
    <location>
        <position position="160"/>
    </location>
    <ligand>
        <name>Mg(2+)</name>
        <dbReference type="ChEBI" id="CHEBI:18420"/>
        <label>1</label>
    </ligand>
</feature>
<feature type="binding site" evidence="1">
    <location>
        <position position="179"/>
    </location>
    <ligand>
        <name>Mg(2+)</name>
        <dbReference type="ChEBI" id="CHEBI:18420"/>
        <label>2</label>
    </ligand>
</feature>
<feature type="binding site" evidence="1">
    <location>
        <position position="181"/>
    </location>
    <ligand>
        <name>Mg(2+)</name>
        <dbReference type="ChEBI" id="CHEBI:18420"/>
        <label>2</label>
    </ligand>
</feature>
<feature type="binding site" evidence="1">
    <location>
        <position position="231"/>
    </location>
    <ligand>
        <name>DNA</name>
        <dbReference type="ChEBI" id="CHEBI:16991"/>
    </ligand>
</feature>
<feature type="binding site" evidence="1">
    <location>
        <position position="233"/>
    </location>
    <ligand>
        <name>DNA</name>
        <dbReference type="ChEBI" id="CHEBI:16991"/>
    </ligand>
</feature>
<feature type="binding site" evidence="1">
    <location>
        <position position="233"/>
    </location>
    <ligand>
        <name>Mg(2+)</name>
        <dbReference type="ChEBI" id="CHEBI:18420"/>
        <label>2</label>
    </ligand>
</feature>
<comment type="function">
    <text evidence="1">Structure-specific nuclease with 5'-flap endonuclease and 5'-3' exonuclease activities involved in DNA replication and repair. During DNA replication, cleaves the 5'-overhanging flap structure that is generated by displacement synthesis when DNA polymerase encounters the 5'-end of a downstream Okazaki fragment. It enters the flap from the 5'-end and then tracks to cleave the flap base, leaving a nick for ligation. Also involved in the long patch base excision repair (LP-BER) pathway, by cleaving within the apurinic/apyrimidinic (AP) site-terminated flap. Acts as a genome stabilization factor that prevents flaps from equilibrating into structures that lead to duplications and deletions. Also possesses 5'-3' exonuclease activity on nicked or gapped double-stranded DNA, and exhibits RNase H activity. Also involved in replication and repair of rDNA and in repairing mitochondrial DNA.</text>
</comment>
<comment type="cofactor">
    <cofactor evidence="1">
        <name>Mg(2+)</name>
        <dbReference type="ChEBI" id="CHEBI:18420"/>
    </cofactor>
    <text evidence="1">Binds 2 magnesium ions per subunit. They probably participate in the reaction catalyzed by the enzyme. May bind an additional third magnesium ion after substrate binding.</text>
</comment>
<comment type="subunit">
    <text evidence="1">Interacts with PCNA. Three molecules of FEN1 bind to one PCNA trimer with each molecule binding to one PCNA monomer. PCNA stimulates the nuclease activity without altering cleavage specificity.</text>
</comment>
<comment type="subcellular location">
    <subcellularLocation>
        <location evidence="1">Nucleus</location>
        <location evidence="1">Nucleolus</location>
    </subcellularLocation>
    <subcellularLocation>
        <location evidence="1">Nucleus</location>
        <location evidence="1">Nucleoplasm</location>
    </subcellularLocation>
    <subcellularLocation>
        <location evidence="1">Mitochondrion</location>
    </subcellularLocation>
    <text evidence="1">Resides mostly in the nucleoli and relocalizes to the nucleoplasm upon DNA damage.</text>
</comment>
<comment type="PTM">
    <text evidence="1">Phosphorylated. Phosphorylation upon DNA damage induces relocalization to the nuclear plasma.</text>
</comment>
<comment type="similarity">
    <text evidence="1">Belongs to the XPG/RAD2 endonuclease family. FEN1 subfamily.</text>
</comment>
<comment type="sequence caution" evidence="3">
    <conflict type="erroneous gene model prediction">
        <sequence resource="EMBL-CDS" id="EEP75693"/>
    </conflict>
</comment>
<sequence>MGIKHLYQIISENAPDAVKSGEIKNQFGRKVAIDASMSIYSFLIAVRSDGQQLMNESGETTSHLMGLFYRTLRMVDNGIKPLYVFDGAPPKLKSGELAKRIARKQEAAEQHEEAKETGTTEDVEKFSRRTVRVTREHNEECKKLLKLMGIPYINAPTEAEAQCAVLARAGKVYAAASEDMDTLCFDSPILLRHLTFSEQRKEPILEIHLDRVLEGLGMDRKTFVDLCILLGCDYLDPIPKVGPNTALKLIRDHGSLEKVVEAMKNDPKQKYTIPDDWPYEQARDLFFEPDVRPADHPECDFKWEAPDVEGLVKFLVEGKGFSEDRVRSGAARLQKNMKTAQQSRLEGFFKPVAKTDEEKASLKRKHEEKLEAAKKKKKEDAKAKREAKSRPKGTA</sequence>
<keyword id="KW-0227">DNA damage</keyword>
<keyword id="KW-0234">DNA repair</keyword>
<keyword id="KW-0235">DNA replication</keyword>
<keyword id="KW-0255">Endonuclease</keyword>
<keyword id="KW-0269">Exonuclease</keyword>
<keyword id="KW-0378">Hydrolase</keyword>
<keyword id="KW-0460">Magnesium</keyword>
<keyword id="KW-0479">Metal-binding</keyword>
<keyword id="KW-0496">Mitochondrion</keyword>
<keyword id="KW-0540">Nuclease</keyword>
<keyword id="KW-0539">Nucleus</keyword>
<keyword id="KW-0597">Phosphoprotein</keyword>
<keyword id="KW-1185">Reference proteome</keyword>
<gene>
    <name evidence="1" type="primary">FEN1</name>
    <name type="ORF">UREG_00539</name>
</gene>
<evidence type="ECO:0000255" key="1">
    <source>
        <dbReference type="HAMAP-Rule" id="MF_03140"/>
    </source>
</evidence>
<evidence type="ECO:0000256" key="2">
    <source>
        <dbReference type="SAM" id="MobiDB-lite"/>
    </source>
</evidence>
<evidence type="ECO:0000305" key="3"/>
<organism>
    <name type="scientific">Uncinocarpus reesii (strain UAMH 1704)</name>
    <dbReference type="NCBI Taxonomy" id="336963"/>
    <lineage>
        <taxon>Eukaryota</taxon>
        <taxon>Fungi</taxon>
        <taxon>Dikarya</taxon>
        <taxon>Ascomycota</taxon>
        <taxon>Pezizomycotina</taxon>
        <taxon>Eurotiomycetes</taxon>
        <taxon>Eurotiomycetidae</taxon>
        <taxon>Onygenales</taxon>
        <taxon>Onygenaceae</taxon>
        <taxon>Uncinocarpus</taxon>
    </lineage>
</organism>
<proteinExistence type="inferred from homology"/>
<name>FEN1_UNCRE</name>
<protein>
    <recommendedName>
        <fullName evidence="1">Flap endonuclease 1</fullName>
        <shortName evidence="1">FEN-1</shortName>
        <ecNumber evidence="1">3.1.-.-</ecNumber>
    </recommendedName>
    <alternativeName>
        <fullName evidence="1">Flap structure-specific endonuclease 1</fullName>
    </alternativeName>
</protein>
<dbReference type="EC" id="3.1.-.-" evidence="1"/>
<dbReference type="EMBL" id="CH476615">
    <property type="protein sequence ID" value="EEP75693.1"/>
    <property type="status" value="ALT_SEQ"/>
    <property type="molecule type" value="Genomic_DNA"/>
</dbReference>
<dbReference type="RefSeq" id="XP_002541026.1">
    <property type="nucleotide sequence ID" value="XM_002540980.1"/>
</dbReference>
<dbReference type="SMR" id="C4JDR3"/>
<dbReference type="FunCoup" id="C4JDR3">
    <property type="interactions" value="924"/>
</dbReference>
<dbReference type="STRING" id="336963.C4JDR3"/>
<dbReference type="GeneID" id="8439460"/>
<dbReference type="KEGG" id="ure:UREG_00539"/>
<dbReference type="VEuPathDB" id="FungiDB:UREG_00539"/>
<dbReference type="eggNOG" id="KOG2519">
    <property type="taxonomic scope" value="Eukaryota"/>
</dbReference>
<dbReference type="HOGENOM" id="CLU_032444_1_1_1"/>
<dbReference type="InParanoid" id="C4JDR3"/>
<dbReference type="OrthoDB" id="1937206at2759"/>
<dbReference type="Proteomes" id="UP000002058">
    <property type="component" value="Unassembled WGS sequence"/>
</dbReference>
<dbReference type="GO" id="GO:0005739">
    <property type="term" value="C:mitochondrion"/>
    <property type="evidence" value="ECO:0007669"/>
    <property type="project" value="UniProtKB-SubCell"/>
</dbReference>
<dbReference type="GO" id="GO:0005730">
    <property type="term" value="C:nucleolus"/>
    <property type="evidence" value="ECO:0007669"/>
    <property type="project" value="UniProtKB-SubCell"/>
</dbReference>
<dbReference type="GO" id="GO:0005654">
    <property type="term" value="C:nucleoplasm"/>
    <property type="evidence" value="ECO:0007669"/>
    <property type="project" value="UniProtKB-SubCell"/>
</dbReference>
<dbReference type="GO" id="GO:0008409">
    <property type="term" value="F:5'-3' exonuclease activity"/>
    <property type="evidence" value="ECO:0007669"/>
    <property type="project" value="UniProtKB-UniRule"/>
</dbReference>
<dbReference type="GO" id="GO:0017108">
    <property type="term" value="F:5'-flap endonuclease activity"/>
    <property type="evidence" value="ECO:0007669"/>
    <property type="project" value="UniProtKB-UniRule"/>
</dbReference>
<dbReference type="GO" id="GO:0003677">
    <property type="term" value="F:DNA binding"/>
    <property type="evidence" value="ECO:0007669"/>
    <property type="project" value="UniProtKB-UniRule"/>
</dbReference>
<dbReference type="GO" id="GO:0000287">
    <property type="term" value="F:magnesium ion binding"/>
    <property type="evidence" value="ECO:0007669"/>
    <property type="project" value="UniProtKB-UniRule"/>
</dbReference>
<dbReference type="GO" id="GO:0006284">
    <property type="term" value="P:base-excision repair"/>
    <property type="evidence" value="ECO:0007669"/>
    <property type="project" value="UniProtKB-UniRule"/>
</dbReference>
<dbReference type="GO" id="GO:0043137">
    <property type="term" value="P:DNA replication, removal of RNA primer"/>
    <property type="evidence" value="ECO:0007669"/>
    <property type="project" value="UniProtKB-UniRule"/>
</dbReference>
<dbReference type="CDD" id="cd09907">
    <property type="entry name" value="H3TH_FEN1-Euk"/>
    <property type="match status" value="1"/>
</dbReference>
<dbReference type="CDD" id="cd09867">
    <property type="entry name" value="PIN_FEN1"/>
    <property type="match status" value="1"/>
</dbReference>
<dbReference type="FunFam" id="1.10.150.20:FF:000009">
    <property type="entry name" value="Flap endonuclease 1"/>
    <property type="match status" value="1"/>
</dbReference>
<dbReference type="FunFam" id="3.40.50.1010:FF:000003">
    <property type="entry name" value="Flap endonuclease 1"/>
    <property type="match status" value="1"/>
</dbReference>
<dbReference type="Gene3D" id="1.10.150.20">
    <property type="entry name" value="5' to 3' exonuclease, C-terminal subdomain"/>
    <property type="match status" value="1"/>
</dbReference>
<dbReference type="Gene3D" id="3.40.50.1010">
    <property type="entry name" value="5'-nuclease"/>
    <property type="match status" value="1"/>
</dbReference>
<dbReference type="HAMAP" id="MF_00614">
    <property type="entry name" value="Fen"/>
    <property type="match status" value="1"/>
</dbReference>
<dbReference type="InterPro" id="IPR036279">
    <property type="entry name" value="5-3_exonuclease_C_sf"/>
</dbReference>
<dbReference type="InterPro" id="IPR023426">
    <property type="entry name" value="Flap_endonuc"/>
</dbReference>
<dbReference type="InterPro" id="IPR008918">
    <property type="entry name" value="HhH2"/>
</dbReference>
<dbReference type="InterPro" id="IPR029060">
    <property type="entry name" value="PIN-like_dom_sf"/>
</dbReference>
<dbReference type="InterPro" id="IPR006086">
    <property type="entry name" value="XPG-I_dom"/>
</dbReference>
<dbReference type="InterPro" id="IPR006084">
    <property type="entry name" value="XPG/Rad2"/>
</dbReference>
<dbReference type="InterPro" id="IPR019974">
    <property type="entry name" value="XPG_CS"/>
</dbReference>
<dbReference type="InterPro" id="IPR006085">
    <property type="entry name" value="XPG_DNA_repair_N"/>
</dbReference>
<dbReference type="PANTHER" id="PTHR11081:SF9">
    <property type="entry name" value="FLAP ENDONUCLEASE 1"/>
    <property type="match status" value="1"/>
</dbReference>
<dbReference type="PANTHER" id="PTHR11081">
    <property type="entry name" value="FLAP ENDONUCLEASE FAMILY MEMBER"/>
    <property type="match status" value="1"/>
</dbReference>
<dbReference type="Pfam" id="PF00867">
    <property type="entry name" value="XPG_I"/>
    <property type="match status" value="1"/>
</dbReference>
<dbReference type="Pfam" id="PF00752">
    <property type="entry name" value="XPG_N"/>
    <property type="match status" value="1"/>
</dbReference>
<dbReference type="PRINTS" id="PR00853">
    <property type="entry name" value="XPGRADSUPER"/>
</dbReference>
<dbReference type="SMART" id="SM00279">
    <property type="entry name" value="HhH2"/>
    <property type="match status" value="1"/>
</dbReference>
<dbReference type="SMART" id="SM00484">
    <property type="entry name" value="XPGI"/>
    <property type="match status" value="1"/>
</dbReference>
<dbReference type="SMART" id="SM00485">
    <property type="entry name" value="XPGN"/>
    <property type="match status" value="1"/>
</dbReference>
<dbReference type="SUPFAM" id="SSF47807">
    <property type="entry name" value="5' to 3' exonuclease, C-terminal subdomain"/>
    <property type="match status" value="1"/>
</dbReference>
<dbReference type="SUPFAM" id="SSF88723">
    <property type="entry name" value="PIN domain-like"/>
    <property type="match status" value="1"/>
</dbReference>
<dbReference type="PROSITE" id="PS00841">
    <property type="entry name" value="XPG_1"/>
    <property type="match status" value="1"/>
</dbReference>
<dbReference type="PROSITE" id="PS00842">
    <property type="entry name" value="XPG_2"/>
    <property type="match status" value="1"/>
</dbReference>
<accession>C4JDR3</accession>
<reference key="1">
    <citation type="journal article" date="2009" name="Genome Res.">
        <title>Comparative genomic analyses of the human fungal pathogens Coccidioides and their relatives.</title>
        <authorList>
            <person name="Sharpton T.J."/>
            <person name="Stajich J.E."/>
            <person name="Rounsley S.D."/>
            <person name="Gardner M.J."/>
            <person name="Wortman J.R."/>
            <person name="Jordar V.S."/>
            <person name="Maiti R."/>
            <person name="Kodira C.D."/>
            <person name="Neafsey D.E."/>
            <person name="Zeng Q."/>
            <person name="Hung C.-Y."/>
            <person name="McMahan C."/>
            <person name="Muszewska A."/>
            <person name="Grynberg M."/>
            <person name="Mandel M.A."/>
            <person name="Kellner E.M."/>
            <person name="Barker B.M."/>
            <person name="Galgiani J.N."/>
            <person name="Orbach M.J."/>
            <person name="Kirkland T.N."/>
            <person name="Cole G.T."/>
            <person name="Henn M.R."/>
            <person name="Birren B.W."/>
            <person name="Taylor J.W."/>
        </authorList>
    </citation>
    <scope>NUCLEOTIDE SEQUENCE [LARGE SCALE GENOMIC DNA]</scope>
    <source>
        <strain>UAMH 1704</strain>
    </source>
</reference>